<gene>
    <name evidence="1" type="primary">mutS2</name>
    <name evidence="1" type="synonym">rqcU</name>
    <name type="ordered locus">BAMEG_4824</name>
</gene>
<protein>
    <recommendedName>
        <fullName evidence="1">Endonuclease MutS2</fullName>
        <ecNumber evidence="1">3.1.-.-</ecNumber>
    </recommendedName>
    <alternativeName>
        <fullName evidence="1">Ribosome-associated protein quality control-upstream factor</fullName>
        <shortName evidence="1">RQC-upstream factor</shortName>
        <shortName evidence="1">RqcU</shortName>
        <ecNumber evidence="1">3.6.4.-</ecNumber>
    </alternativeName>
</protein>
<dbReference type="EC" id="3.1.-.-" evidence="1"/>
<dbReference type="EC" id="3.6.4.-" evidence="1"/>
<dbReference type="EMBL" id="CP001215">
    <property type="protein sequence ID" value="ACP12391.1"/>
    <property type="molecule type" value="Genomic_DNA"/>
</dbReference>
<dbReference type="RefSeq" id="WP_000893730.1">
    <property type="nucleotide sequence ID" value="NC_012581.1"/>
</dbReference>
<dbReference type="SMR" id="C3L808"/>
<dbReference type="KEGG" id="bah:BAMEG_4824"/>
<dbReference type="HOGENOM" id="CLU_011252_2_1_9"/>
<dbReference type="GO" id="GO:0005524">
    <property type="term" value="F:ATP binding"/>
    <property type="evidence" value="ECO:0007669"/>
    <property type="project" value="UniProtKB-UniRule"/>
</dbReference>
<dbReference type="GO" id="GO:0016887">
    <property type="term" value="F:ATP hydrolysis activity"/>
    <property type="evidence" value="ECO:0007669"/>
    <property type="project" value="InterPro"/>
</dbReference>
<dbReference type="GO" id="GO:0140664">
    <property type="term" value="F:ATP-dependent DNA damage sensor activity"/>
    <property type="evidence" value="ECO:0007669"/>
    <property type="project" value="InterPro"/>
</dbReference>
<dbReference type="GO" id="GO:0004519">
    <property type="term" value="F:endonuclease activity"/>
    <property type="evidence" value="ECO:0007669"/>
    <property type="project" value="UniProtKB-UniRule"/>
</dbReference>
<dbReference type="GO" id="GO:0030983">
    <property type="term" value="F:mismatched DNA binding"/>
    <property type="evidence" value="ECO:0007669"/>
    <property type="project" value="InterPro"/>
</dbReference>
<dbReference type="GO" id="GO:0043023">
    <property type="term" value="F:ribosomal large subunit binding"/>
    <property type="evidence" value="ECO:0007669"/>
    <property type="project" value="UniProtKB-UniRule"/>
</dbReference>
<dbReference type="GO" id="GO:0019843">
    <property type="term" value="F:rRNA binding"/>
    <property type="evidence" value="ECO:0007669"/>
    <property type="project" value="UniProtKB-UniRule"/>
</dbReference>
<dbReference type="GO" id="GO:0006298">
    <property type="term" value="P:mismatch repair"/>
    <property type="evidence" value="ECO:0007669"/>
    <property type="project" value="InterPro"/>
</dbReference>
<dbReference type="GO" id="GO:0045910">
    <property type="term" value="P:negative regulation of DNA recombination"/>
    <property type="evidence" value="ECO:0007669"/>
    <property type="project" value="InterPro"/>
</dbReference>
<dbReference type="GO" id="GO:0072344">
    <property type="term" value="P:rescue of stalled ribosome"/>
    <property type="evidence" value="ECO:0007669"/>
    <property type="project" value="UniProtKB-UniRule"/>
</dbReference>
<dbReference type="CDD" id="cd03280">
    <property type="entry name" value="ABC_MutS2"/>
    <property type="match status" value="1"/>
</dbReference>
<dbReference type="CDD" id="cd06503">
    <property type="entry name" value="ATP-synt_Fo_b"/>
    <property type="match status" value="1"/>
</dbReference>
<dbReference type="FunFam" id="3.40.50.300:FF:000830">
    <property type="entry name" value="Endonuclease MutS2"/>
    <property type="match status" value="1"/>
</dbReference>
<dbReference type="Gene3D" id="1.10.1420.10">
    <property type="match status" value="2"/>
</dbReference>
<dbReference type="Gene3D" id="3.30.1370.110">
    <property type="match status" value="1"/>
</dbReference>
<dbReference type="Gene3D" id="3.40.50.300">
    <property type="entry name" value="P-loop containing nucleotide triphosphate hydrolases"/>
    <property type="match status" value="1"/>
</dbReference>
<dbReference type="HAMAP" id="MF_00092">
    <property type="entry name" value="MutS2"/>
    <property type="match status" value="1"/>
</dbReference>
<dbReference type="InterPro" id="IPR000432">
    <property type="entry name" value="DNA_mismatch_repair_MutS_C"/>
</dbReference>
<dbReference type="InterPro" id="IPR007696">
    <property type="entry name" value="DNA_mismatch_repair_MutS_core"/>
</dbReference>
<dbReference type="InterPro" id="IPR036187">
    <property type="entry name" value="DNA_mismatch_repair_MutS_sf"/>
</dbReference>
<dbReference type="InterPro" id="IPR046893">
    <property type="entry name" value="MSSS"/>
</dbReference>
<dbReference type="InterPro" id="IPR045076">
    <property type="entry name" value="MutS"/>
</dbReference>
<dbReference type="InterPro" id="IPR005747">
    <property type="entry name" value="MutS2"/>
</dbReference>
<dbReference type="InterPro" id="IPR027417">
    <property type="entry name" value="P-loop_NTPase"/>
</dbReference>
<dbReference type="InterPro" id="IPR002625">
    <property type="entry name" value="Smr_dom"/>
</dbReference>
<dbReference type="InterPro" id="IPR036063">
    <property type="entry name" value="Smr_dom_sf"/>
</dbReference>
<dbReference type="NCBIfam" id="TIGR01069">
    <property type="entry name" value="mutS2"/>
    <property type="match status" value="1"/>
</dbReference>
<dbReference type="PANTHER" id="PTHR48466:SF2">
    <property type="entry name" value="OS10G0509000 PROTEIN"/>
    <property type="match status" value="1"/>
</dbReference>
<dbReference type="PANTHER" id="PTHR48466">
    <property type="entry name" value="OS10G0509000 PROTEIN-RELATED"/>
    <property type="match status" value="1"/>
</dbReference>
<dbReference type="Pfam" id="PF20297">
    <property type="entry name" value="MSSS"/>
    <property type="match status" value="1"/>
</dbReference>
<dbReference type="Pfam" id="PF00488">
    <property type="entry name" value="MutS_V"/>
    <property type="match status" value="1"/>
</dbReference>
<dbReference type="Pfam" id="PF01713">
    <property type="entry name" value="Smr"/>
    <property type="match status" value="1"/>
</dbReference>
<dbReference type="PIRSF" id="PIRSF005814">
    <property type="entry name" value="MutS_YshD"/>
    <property type="match status" value="1"/>
</dbReference>
<dbReference type="SMART" id="SM00534">
    <property type="entry name" value="MUTSac"/>
    <property type="match status" value="1"/>
</dbReference>
<dbReference type="SMART" id="SM00533">
    <property type="entry name" value="MUTSd"/>
    <property type="match status" value="1"/>
</dbReference>
<dbReference type="SMART" id="SM00463">
    <property type="entry name" value="SMR"/>
    <property type="match status" value="1"/>
</dbReference>
<dbReference type="SUPFAM" id="SSF48334">
    <property type="entry name" value="DNA repair protein MutS, domain III"/>
    <property type="match status" value="1"/>
</dbReference>
<dbReference type="SUPFAM" id="SSF52540">
    <property type="entry name" value="P-loop containing nucleoside triphosphate hydrolases"/>
    <property type="match status" value="1"/>
</dbReference>
<dbReference type="SUPFAM" id="SSF160443">
    <property type="entry name" value="SMR domain-like"/>
    <property type="match status" value="1"/>
</dbReference>
<dbReference type="PROSITE" id="PS00486">
    <property type="entry name" value="DNA_MISMATCH_REPAIR_2"/>
    <property type="match status" value="1"/>
</dbReference>
<dbReference type="PROSITE" id="PS50828">
    <property type="entry name" value="SMR"/>
    <property type="match status" value="1"/>
</dbReference>
<proteinExistence type="inferred from homology"/>
<organism>
    <name type="scientific">Bacillus anthracis (strain CDC 684 / NRRL 3495)</name>
    <dbReference type="NCBI Taxonomy" id="568206"/>
    <lineage>
        <taxon>Bacteria</taxon>
        <taxon>Bacillati</taxon>
        <taxon>Bacillota</taxon>
        <taxon>Bacilli</taxon>
        <taxon>Bacillales</taxon>
        <taxon>Bacillaceae</taxon>
        <taxon>Bacillus</taxon>
        <taxon>Bacillus cereus group</taxon>
    </lineage>
</organism>
<sequence>MLERTLRVLEYNKVKEQLLEHTASSLGRDKVKHLVPSTDFEEIVEMQDTTDEAAKVIRLKGSAPLGGITDIRSNVKRAKIGSMLSPNELLDIANTMYGSRNMKRFIEDMVDNGVELPILETHVAQIVSLYDLEKKITNCIGDGGEVVDSASDKLRGIRTQIRTAESRIREKLENMTRSSNAQKMLSDSIVTIRNERYVIPVKQEYRGVYGGIVHDQSASGQTLFIEPQVIVELNNALQEARVKEKQEIERILLMLTEEVAVEADIVLSNVEVVANLDFIFAKAFYAKRIKATKPIVNNERYMDLRQARHPLIDPEVIVPNNIMLGKDFTTIVITGPNTGGKTVTLKTVGICVLMAQSGLHIPVMDESEICVFKNIFADIGDEQSIEQSLSTFSSHMVNIVDILEKADFESLVLFDELGAGTDPQEGAALAISILDEVCNRGARVVATTHYPELKAYGYNREQVINASVEFDVNTLSPTHKLLIGVPGRSNAFEISKRLGLSNRVIDQARNHISTDTNKIENMIAKLEESQKNAERDWNEAEALRKQSEKLHRELQRQIIEFNEERDERLLKAQKEGEEKVEAAKKEAEGIIQELRQLRKAQLANVKDHELIEAKSRLEGAAPELVKKQKVNVKNTAPKQQLRAGDEVKVLTFGQKGQLLEKVSDTEWSVQIGILKMKVKESNMEYINTPKQTEKKAVATVKGRDYHVSLELDLRGERFENAMARVEKYLDDAQLASYPRVSIIHGKGTGALRQGVQDYLKKHRGVKTFRYGDMGEGGLGVTVVELK</sequence>
<accession>C3L808</accession>
<name>MUTS2_BACAC</name>
<feature type="chain" id="PRO_1000192211" description="Endonuclease MutS2">
    <location>
        <begin position="1"/>
        <end position="786"/>
    </location>
</feature>
<feature type="domain" description="Smr" evidence="1">
    <location>
        <begin position="711"/>
        <end position="786"/>
    </location>
</feature>
<feature type="binding site" evidence="1">
    <location>
        <begin position="335"/>
        <end position="342"/>
    </location>
    <ligand>
        <name>ATP</name>
        <dbReference type="ChEBI" id="CHEBI:30616"/>
    </ligand>
</feature>
<reference key="1">
    <citation type="submission" date="2008-10" db="EMBL/GenBank/DDBJ databases">
        <title>Genome sequence of Bacillus anthracis str. CDC 684.</title>
        <authorList>
            <person name="Dodson R.J."/>
            <person name="Munk A.C."/>
            <person name="Brettin T."/>
            <person name="Bruce D."/>
            <person name="Detter C."/>
            <person name="Tapia R."/>
            <person name="Han C."/>
            <person name="Sutton G."/>
            <person name="Sims D."/>
        </authorList>
    </citation>
    <scope>NUCLEOTIDE SEQUENCE [LARGE SCALE GENOMIC DNA]</scope>
    <source>
        <strain>CDC 684 / NRRL 3495</strain>
    </source>
</reference>
<evidence type="ECO:0000255" key="1">
    <source>
        <dbReference type="HAMAP-Rule" id="MF_00092"/>
    </source>
</evidence>
<comment type="function">
    <text evidence="1">Endonuclease that is involved in the suppression of homologous recombination and thus may have a key role in the control of bacterial genetic diversity.</text>
</comment>
<comment type="function">
    <text evidence="1">Acts as a ribosome collision sensor, splitting the ribosome into its 2 subunits. Detects stalled/collided 70S ribosomes which it binds and splits by an ATP-hydrolysis driven conformational change. Acts upstream of the ribosome quality control system (RQC), a ribosome-associated complex that mediates the extraction of incompletely synthesized nascent chains from stalled ribosomes and their subsequent degradation. Probably generates substrates for RQC.</text>
</comment>
<comment type="subunit">
    <text evidence="1">Homodimer. Binds to stalled ribosomes, contacting rRNA.</text>
</comment>
<comment type="similarity">
    <text evidence="1">Belongs to the DNA mismatch repair MutS family. MutS2 subfamily.</text>
</comment>
<keyword id="KW-0067">ATP-binding</keyword>
<keyword id="KW-0238">DNA-binding</keyword>
<keyword id="KW-0255">Endonuclease</keyword>
<keyword id="KW-0378">Hydrolase</keyword>
<keyword id="KW-0540">Nuclease</keyword>
<keyword id="KW-0547">Nucleotide-binding</keyword>
<keyword id="KW-0694">RNA-binding</keyword>
<keyword id="KW-0699">rRNA-binding</keyword>